<keyword id="KW-0687">Ribonucleoprotein</keyword>
<keyword id="KW-0689">Ribosomal protein</keyword>
<keyword id="KW-0694">RNA-binding</keyword>
<keyword id="KW-0699">rRNA-binding</keyword>
<name>RL14_BURP6</name>
<proteinExistence type="inferred from homology"/>
<feature type="chain" id="PRO_1000055537" description="Large ribosomal subunit protein uL14">
    <location>
        <begin position="1"/>
        <end position="122"/>
    </location>
</feature>
<sequence>MIQTESRLEVADNTGAREVMCIKVLGGSKRRYASIGDIIKVSVKEATPRGRVKKGEIYNAVVVRTAKGVRRQDGSLIKFDGNAAVLLNNKLEPIGTRIFGPVTRELRSERFMKIVSLAPEVL</sequence>
<gene>
    <name evidence="1" type="primary">rplN</name>
    <name type="ordered locus">BURPS668_3736</name>
</gene>
<organism>
    <name type="scientific">Burkholderia pseudomallei (strain 668)</name>
    <dbReference type="NCBI Taxonomy" id="320373"/>
    <lineage>
        <taxon>Bacteria</taxon>
        <taxon>Pseudomonadati</taxon>
        <taxon>Pseudomonadota</taxon>
        <taxon>Betaproteobacteria</taxon>
        <taxon>Burkholderiales</taxon>
        <taxon>Burkholderiaceae</taxon>
        <taxon>Burkholderia</taxon>
        <taxon>pseudomallei group</taxon>
    </lineage>
</organism>
<dbReference type="EMBL" id="CP000570">
    <property type="protein sequence ID" value="ABN81730.1"/>
    <property type="molecule type" value="Genomic_DNA"/>
</dbReference>
<dbReference type="RefSeq" id="WP_004197951.1">
    <property type="nucleotide sequence ID" value="NC_009074.1"/>
</dbReference>
<dbReference type="SMR" id="A3NEG9"/>
<dbReference type="GeneID" id="93171007"/>
<dbReference type="KEGG" id="bpd:BURPS668_3736"/>
<dbReference type="HOGENOM" id="CLU_095071_2_1_4"/>
<dbReference type="GO" id="GO:0022625">
    <property type="term" value="C:cytosolic large ribosomal subunit"/>
    <property type="evidence" value="ECO:0007669"/>
    <property type="project" value="TreeGrafter"/>
</dbReference>
<dbReference type="GO" id="GO:0070180">
    <property type="term" value="F:large ribosomal subunit rRNA binding"/>
    <property type="evidence" value="ECO:0007669"/>
    <property type="project" value="TreeGrafter"/>
</dbReference>
<dbReference type="GO" id="GO:0003735">
    <property type="term" value="F:structural constituent of ribosome"/>
    <property type="evidence" value="ECO:0007669"/>
    <property type="project" value="InterPro"/>
</dbReference>
<dbReference type="GO" id="GO:0006412">
    <property type="term" value="P:translation"/>
    <property type="evidence" value="ECO:0007669"/>
    <property type="project" value="UniProtKB-UniRule"/>
</dbReference>
<dbReference type="CDD" id="cd00337">
    <property type="entry name" value="Ribosomal_uL14"/>
    <property type="match status" value="1"/>
</dbReference>
<dbReference type="FunFam" id="2.40.150.20:FF:000001">
    <property type="entry name" value="50S ribosomal protein L14"/>
    <property type="match status" value="1"/>
</dbReference>
<dbReference type="Gene3D" id="2.40.150.20">
    <property type="entry name" value="Ribosomal protein L14"/>
    <property type="match status" value="1"/>
</dbReference>
<dbReference type="HAMAP" id="MF_01367">
    <property type="entry name" value="Ribosomal_uL14"/>
    <property type="match status" value="1"/>
</dbReference>
<dbReference type="InterPro" id="IPR000218">
    <property type="entry name" value="Ribosomal_uL14"/>
</dbReference>
<dbReference type="InterPro" id="IPR005745">
    <property type="entry name" value="Ribosomal_uL14_bac-type"/>
</dbReference>
<dbReference type="InterPro" id="IPR019972">
    <property type="entry name" value="Ribosomal_uL14_CS"/>
</dbReference>
<dbReference type="InterPro" id="IPR036853">
    <property type="entry name" value="Ribosomal_uL14_sf"/>
</dbReference>
<dbReference type="NCBIfam" id="TIGR01067">
    <property type="entry name" value="rplN_bact"/>
    <property type="match status" value="1"/>
</dbReference>
<dbReference type="PANTHER" id="PTHR11761">
    <property type="entry name" value="50S/60S RIBOSOMAL PROTEIN L14/L23"/>
    <property type="match status" value="1"/>
</dbReference>
<dbReference type="PANTHER" id="PTHR11761:SF3">
    <property type="entry name" value="LARGE RIBOSOMAL SUBUNIT PROTEIN UL14M"/>
    <property type="match status" value="1"/>
</dbReference>
<dbReference type="Pfam" id="PF00238">
    <property type="entry name" value="Ribosomal_L14"/>
    <property type="match status" value="1"/>
</dbReference>
<dbReference type="SMART" id="SM01374">
    <property type="entry name" value="Ribosomal_L14"/>
    <property type="match status" value="1"/>
</dbReference>
<dbReference type="SUPFAM" id="SSF50193">
    <property type="entry name" value="Ribosomal protein L14"/>
    <property type="match status" value="1"/>
</dbReference>
<dbReference type="PROSITE" id="PS00049">
    <property type="entry name" value="RIBOSOMAL_L14"/>
    <property type="match status" value="1"/>
</dbReference>
<comment type="function">
    <text evidence="1">Binds to 23S rRNA. Forms part of two intersubunit bridges in the 70S ribosome.</text>
</comment>
<comment type="subunit">
    <text evidence="1">Part of the 50S ribosomal subunit. Forms a cluster with proteins L3 and L19. In the 70S ribosome, L14 and L19 interact and together make contacts with the 16S rRNA in bridges B5 and B8.</text>
</comment>
<comment type="similarity">
    <text evidence="1">Belongs to the universal ribosomal protein uL14 family.</text>
</comment>
<reference key="1">
    <citation type="journal article" date="2010" name="Genome Biol. Evol.">
        <title>Continuing evolution of Burkholderia mallei through genome reduction and large-scale rearrangements.</title>
        <authorList>
            <person name="Losada L."/>
            <person name="Ronning C.M."/>
            <person name="DeShazer D."/>
            <person name="Woods D."/>
            <person name="Fedorova N."/>
            <person name="Kim H.S."/>
            <person name="Shabalina S.A."/>
            <person name="Pearson T.R."/>
            <person name="Brinkac L."/>
            <person name="Tan P."/>
            <person name="Nandi T."/>
            <person name="Crabtree J."/>
            <person name="Badger J."/>
            <person name="Beckstrom-Sternberg S."/>
            <person name="Saqib M."/>
            <person name="Schutzer S.E."/>
            <person name="Keim P."/>
            <person name="Nierman W.C."/>
        </authorList>
    </citation>
    <scope>NUCLEOTIDE SEQUENCE [LARGE SCALE GENOMIC DNA]</scope>
    <source>
        <strain>668</strain>
    </source>
</reference>
<accession>A3NEG9</accession>
<evidence type="ECO:0000255" key="1">
    <source>
        <dbReference type="HAMAP-Rule" id="MF_01367"/>
    </source>
</evidence>
<evidence type="ECO:0000305" key="2"/>
<protein>
    <recommendedName>
        <fullName evidence="1">Large ribosomal subunit protein uL14</fullName>
    </recommendedName>
    <alternativeName>
        <fullName evidence="2">50S ribosomal protein L14</fullName>
    </alternativeName>
</protein>